<keyword id="KW-1003">Cell membrane</keyword>
<keyword id="KW-1015">Disulfide bond</keyword>
<keyword id="KW-0297">G-protein coupled receptor</keyword>
<keyword id="KW-0325">Glycoprotein</keyword>
<keyword id="KW-0472">Membrane</keyword>
<keyword id="KW-0552">Olfaction</keyword>
<keyword id="KW-0675">Receptor</keyword>
<keyword id="KW-1185">Reference proteome</keyword>
<keyword id="KW-0716">Sensory transduction</keyword>
<keyword id="KW-0807">Transducer</keyword>
<keyword id="KW-0812">Transmembrane</keyword>
<keyword id="KW-1133">Transmembrane helix</keyword>
<sequence>MLSPNHTIVTEFILLGLTDDPVLEKILFGVFLAIYLITLAGNLCMILLIRTNSQLQTPMYFFLGHLSFVDICYSSNVTPNMLHNFLSEQKTISYAGCFTQCLLFIALVITEFYFLASMALDRYVAICSPLHYSSRMSKNICISLVTVPYMYGFLNGLSQTLLTFHLSFCGSLEINHFYCADPPLIMLACSDTRVKKMAMFVVAGFTLSSSLFIILLSYLFIFAAIFRIRSAEGRHKAFSTCASHLTIVTLFYGTLFCMYVRPPSEKSVEESKIIAVFYTFLSPMLNPLIYSLRNRDVILAIQQMIRGKSFCKIAV</sequence>
<dbReference type="EMBL" id="AP002517">
    <property type="status" value="NOT_ANNOTATED_CDS"/>
    <property type="molecule type" value="Genomic_DNA"/>
</dbReference>
<dbReference type="EMBL" id="CH471076">
    <property type="protein sequence ID" value="EAW73718.1"/>
    <property type="molecule type" value="Genomic_DNA"/>
</dbReference>
<dbReference type="EMBL" id="BC140733">
    <property type="protein sequence ID" value="AAI40734.1"/>
    <property type="molecule type" value="mRNA"/>
</dbReference>
<dbReference type="EMBL" id="BK004515">
    <property type="protein sequence ID" value="DAA04913.1"/>
    <property type="molecule type" value="Genomic_DNA"/>
</dbReference>
<dbReference type="CCDS" id="CCDS53630.1"/>
<dbReference type="RefSeq" id="NP_001004741.1">
    <property type="nucleotide sequence ID" value="NM_001004741.1"/>
</dbReference>
<dbReference type="SMR" id="Q6IEU7"/>
<dbReference type="BioGRID" id="133429">
    <property type="interactions" value="1"/>
</dbReference>
<dbReference type="FunCoup" id="Q6IEU7">
    <property type="interactions" value="418"/>
</dbReference>
<dbReference type="STRING" id="9606.ENSP00000436004"/>
<dbReference type="GlyCosmos" id="Q6IEU7">
    <property type="glycosylation" value="1 site, No reported glycans"/>
</dbReference>
<dbReference type="GlyGen" id="Q6IEU7">
    <property type="glycosylation" value="1 site"/>
</dbReference>
<dbReference type="iPTMnet" id="Q6IEU7"/>
<dbReference type="PhosphoSitePlus" id="Q6IEU7"/>
<dbReference type="BioMuta" id="OR5M10"/>
<dbReference type="DMDM" id="74762305"/>
<dbReference type="MassIVE" id="Q6IEU7"/>
<dbReference type="PaxDb" id="9606-ENSP00000436004"/>
<dbReference type="Antibodypedia" id="72069">
    <property type="antibodies" value="26 antibodies from 12 providers"/>
</dbReference>
<dbReference type="DNASU" id="390167"/>
<dbReference type="Ensembl" id="ENST00000526538.2">
    <property type="protein sequence ID" value="ENSP00000435416.2"/>
    <property type="gene ID" value="ENSG00000254834.5"/>
</dbReference>
<dbReference type="GeneID" id="390167"/>
<dbReference type="KEGG" id="hsa:390167"/>
<dbReference type="MANE-Select" id="ENST00000526538.2">
    <property type="protein sequence ID" value="ENSP00000435416.2"/>
    <property type="RefSeq nucleotide sequence ID" value="NM_001004741.1"/>
    <property type="RefSeq protein sequence ID" value="NP_001004741.1"/>
</dbReference>
<dbReference type="UCSC" id="uc001niz.1">
    <property type="organism name" value="human"/>
</dbReference>
<dbReference type="AGR" id="HGNC:15290"/>
<dbReference type="CTD" id="390167"/>
<dbReference type="GeneCards" id="OR5M10"/>
<dbReference type="HGNC" id="HGNC:15290">
    <property type="gene designation" value="OR5M10"/>
</dbReference>
<dbReference type="HPA" id="ENSG00000254834">
    <property type="expression patterns" value="Not detected"/>
</dbReference>
<dbReference type="neXtProt" id="NX_Q6IEU7"/>
<dbReference type="PharmGKB" id="PA32547"/>
<dbReference type="VEuPathDB" id="HostDB:ENSG00000254834"/>
<dbReference type="eggNOG" id="ENOG502TDE6">
    <property type="taxonomic scope" value="Eukaryota"/>
</dbReference>
<dbReference type="GeneTree" id="ENSGT01120000271889"/>
<dbReference type="HOGENOM" id="CLU_012526_1_0_1"/>
<dbReference type="InParanoid" id="Q6IEU7"/>
<dbReference type="OMA" id="RGKSFCK"/>
<dbReference type="OrthoDB" id="9518048at2759"/>
<dbReference type="PAN-GO" id="Q6IEU7">
    <property type="GO annotations" value="4 GO annotations based on evolutionary models"/>
</dbReference>
<dbReference type="PhylomeDB" id="Q6IEU7"/>
<dbReference type="TreeFam" id="TF352751"/>
<dbReference type="PathwayCommons" id="Q6IEU7"/>
<dbReference type="Reactome" id="R-HSA-9752946">
    <property type="pathway name" value="Expression and translocation of olfactory receptors"/>
</dbReference>
<dbReference type="BioGRID-ORCS" id="390167">
    <property type="hits" value="9 hits in 651 CRISPR screens"/>
</dbReference>
<dbReference type="GeneWiki" id="OR5M10"/>
<dbReference type="GenomeRNAi" id="390167"/>
<dbReference type="Pharos" id="Q6IEU7">
    <property type="development level" value="Tdark"/>
</dbReference>
<dbReference type="PRO" id="PR:Q6IEU7"/>
<dbReference type="Proteomes" id="UP000005640">
    <property type="component" value="Chromosome 11"/>
</dbReference>
<dbReference type="RNAct" id="Q6IEU7">
    <property type="molecule type" value="protein"/>
</dbReference>
<dbReference type="ExpressionAtlas" id="Q6IEU7">
    <property type="expression patterns" value="baseline and differential"/>
</dbReference>
<dbReference type="GO" id="GO:0005886">
    <property type="term" value="C:plasma membrane"/>
    <property type="evidence" value="ECO:0007669"/>
    <property type="project" value="UniProtKB-SubCell"/>
</dbReference>
<dbReference type="GO" id="GO:0004930">
    <property type="term" value="F:G protein-coupled receptor activity"/>
    <property type="evidence" value="ECO:0007669"/>
    <property type="project" value="UniProtKB-KW"/>
</dbReference>
<dbReference type="GO" id="GO:0005549">
    <property type="term" value="F:odorant binding"/>
    <property type="evidence" value="ECO:0000318"/>
    <property type="project" value="GO_Central"/>
</dbReference>
<dbReference type="GO" id="GO:0004984">
    <property type="term" value="F:olfactory receptor activity"/>
    <property type="evidence" value="ECO:0000318"/>
    <property type="project" value="GO_Central"/>
</dbReference>
<dbReference type="GO" id="GO:0007186">
    <property type="term" value="P:G protein-coupled receptor signaling pathway"/>
    <property type="evidence" value="ECO:0000318"/>
    <property type="project" value="GO_Central"/>
</dbReference>
<dbReference type="GO" id="GO:0007608">
    <property type="term" value="P:sensory perception of smell"/>
    <property type="evidence" value="ECO:0000318"/>
    <property type="project" value="GO_Central"/>
</dbReference>
<dbReference type="CDD" id="cd15412">
    <property type="entry name" value="7tmA_OR5M-like"/>
    <property type="match status" value="1"/>
</dbReference>
<dbReference type="FunFam" id="1.20.1070.10:FF:000003">
    <property type="entry name" value="Olfactory receptor"/>
    <property type="match status" value="1"/>
</dbReference>
<dbReference type="Gene3D" id="1.20.1070.10">
    <property type="entry name" value="Rhodopsin 7-helix transmembrane proteins"/>
    <property type="match status" value="1"/>
</dbReference>
<dbReference type="InterPro" id="IPR000276">
    <property type="entry name" value="GPCR_Rhodpsn"/>
</dbReference>
<dbReference type="InterPro" id="IPR017452">
    <property type="entry name" value="GPCR_Rhodpsn_7TM"/>
</dbReference>
<dbReference type="InterPro" id="IPR000725">
    <property type="entry name" value="Olfact_rcpt"/>
</dbReference>
<dbReference type="PANTHER" id="PTHR48018">
    <property type="entry name" value="OLFACTORY RECEPTOR"/>
    <property type="match status" value="1"/>
</dbReference>
<dbReference type="Pfam" id="PF13853">
    <property type="entry name" value="7tm_4"/>
    <property type="match status" value="1"/>
</dbReference>
<dbReference type="PRINTS" id="PR00237">
    <property type="entry name" value="GPCRRHODOPSN"/>
</dbReference>
<dbReference type="PRINTS" id="PR00245">
    <property type="entry name" value="OLFACTORYR"/>
</dbReference>
<dbReference type="SUPFAM" id="SSF81321">
    <property type="entry name" value="Family A G protein-coupled receptor-like"/>
    <property type="match status" value="1"/>
</dbReference>
<dbReference type="PROSITE" id="PS00237">
    <property type="entry name" value="G_PROTEIN_RECEP_F1_1"/>
    <property type="match status" value="1"/>
</dbReference>
<dbReference type="PROSITE" id="PS50262">
    <property type="entry name" value="G_PROTEIN_RECEP_F1_2"/>
    <property type="match status" value="1"/>
</dbReference>
<accession>Q6IEU7</accession>
<accession>B9EIL9</accession>
<reference key="1">
    <citation type="journal article" date="2006" name="Nature">
        <title>Human chromosome 11 DNA sequence and analysis including novel gene identification.</title>
        <authorList>
            <person name="Taylor T.D."/>
            <person name="Noguchi H."/>
            <person name="Totoki Y."/>
            <person name="Toyoda A."/>
            <person name="Kuroki Y."/>
            <person name="Dewar K."/>
            <person name="Lloyd C."/>
            <person name="Itoh T."/>
            <person name="Takeda T."/>
            <person name="Kim D.-W."/>
            <person name="She X."/>
            <person name="Barlow K.F."/>
            <person name="Bloom T."/>
            <person name="Bruford E."/>
            <person name="Chang J.L."/>
            <person name="Cuomo C.A."/>
            <person name="Eichler E."/>
            <person name="FitzGerald M.G."/>
            <person name="Jaffe D.B."/>
            <person name="LaButti K."/>
            <person name="Nicol R."/>
            <person name="Park H.-S."/>
            <person name="Seaman C."/>
            <person name="Sougnez C."/>
            <person name="Yang X."/>
            <person name="Zimmer A.R."/>
            <person name="Zody M.C."/>
            <person name="Birren B.W."/>
            <person name="Nusbaum C."/>
            <person name="Fujiyama A."/>
            <person name="Hattori M."/>
            <person name="Rogers J."/>
            <person name="Lander E.S."/>
            <person name="Sakaki Y."/>
        </authorList>
    </citation>
    <scope>NUCLEOTIDE SEQUENCE [LARGE SCALE GENOMIC DNA]</scope>
</reference>
<reference key="2">
    <citation type="submission" date="2005-07" db="EMBL/GenBank/DDBJ databases">
        <authorList>
            <person name="Mural R.J."/>
            <person name="Istrail S."/>
            <person name="Sutton G.G."/>
            <person name="Florea L."/>
            <person name="Halpern A.L."/>
            <person name="Mobarry C.M."/>
            <person name="Lippert R."/>
            <person name="Walenz B."/>
            <person name="Shatkay H."/>
            <person name="Dew I."/>
            <person name="Miller J.R."/>
            <person name="Flanigan M.J."/>
            <person name="Edwards N.J."/>
            <person name="Bolanos R."/>
            <person name="Fasulo D."/>
            <person name="Halldorsson B.V."/>
            <person name="Hannenhalli S."/>
            <person name="Turner R."/>
            <person name="Yooseph S."/>
            <person name="Lu F."/>
            <person name="Nusskern D.R."/>
            <person name="Shue B.C."/>
            <person name="Zheng X.H."/>
            <person name="Zhong F."/>
            <person name="Delcher A.L."/>
            <person name="Huson D.H."/>
            <person name="Kravitz S.A."/>
            <person name="Mouchard L."/>
            <person name="Reinert K."/>
            <person name="Remington K.A."/>
            <person name="Clark A.G."/>
            <person name="Waterman M.S."/>
            <person name="Eichler E.E."/>
            <person name="Adams M.D."/>
            <person name="Hunkapiller M.W."/>
            <person name="Myers E.W."/>
            <person name="Venter J.C."/>
        </authorList>
    </citation>
    <scope>NUCLEOTIDE SEQUENCE [LARGE SCALE GENOMIC DNA]</scope>
    <scope>VARIANT LEU-69</scope>
</reference>
<reference key="3">
    <citation type="journal article" date="2004" name="Genome Res.">
        <title>The status, quality, and expansion of the NIH full-length cDNA project: the Mammalian Gene Collection (MGC).</title>
        <authorList>
            <consortium name="The MGC Project Team"/>
        </authorList>
    </citation>
    <scope>NUCLEOTIDE SEQUENCE [LARGE SCALE MRNA]</scope>
    <scope>VARIANT LEU-69</scope>
</reference>
<reference key="4">
    <citation type="journal article" date="2004" name="Proc. Natl. Acad. Sci. U.S.A.">
        <title>The human olfactory receptor gene family.</title>
        <authorList>
            <person name="Malnic B."/>
            <person name="Godfrey P.A."/>
            <person name="Buck L.B."/>
        </authorList>
    </citation>
    <scope>IDENTIFICATION</scope>
</reference>
<reference key="5">
    <citation type="journal article" date="2004" name="Proc. Natl. Acad. Sci. U.S.A.">
        <authorList>
            <person name="Malnic B."/>
            <person name="Godfrey P.A."/>
            <person name="Buck L.B."/>
        </authorList>
    </citation>
    <scope>ERRATUM OF PUBMED:14983052</scope>
</reference>
<feature type="chain" id="PRO_0000150608" description="Olfactory receptor 5M10">
    <location>
        <begin position="1"/>
        <end position="315"/>
    </location>
</feature>
<feature type="topological domain" description="Extracellular" evidence="1">
    <location>
        <begin position="1"/>
        <end position="25"/>
    </location>
</feature>
<feature type="transmembrane region" description="Helical; Name=1" evidence="1">
    <location>
        <begin position="26"/>
        <end position="46"/>
    </location>
</feature>
<feature type="topological domain" description="Cytoplasmic" evidence="1">
    <location>
        <begin position="47"/>
        <end position="54"/>
    </location>
</feature>
<feature type="transmembrane region" description="Helical; Name=2" evidence="1">
    <location>
        <begin position="55"/>
        <end position="75"/>
    </location>
</feature>
<feature type="topological domain" description="Extracellular" evidence="1">
    <location>
        <begin position="76"/>
        <end position="99"/>
    </location>
</feature>
<feature type="transmembrane region" description="Helical; Name=3" evidence="1">
    <location>
        <begin position="100"/>
        <end position="120"/>
    </location>
</feature>
<feature type="topological domain" description="Cytoplasmic" evidence="1">
    <location>
        <begin position="121"/>
        <end position="139"/>
    </location>
</feature>
<feature type="transmembrane region" description="Helical; Name=4" evidence="1">
    <location>
        <begin position="140"/>
        <end position="160"/>
    </location>
</feature>
<feature type="topological domain" description="Extracellular" evidence="1">
    <location>
        <begin position="161"/>
        <end position="196"/>
    </location>
</feature>
<feature type="transmembrane region" description="Helical; Name=5" evidence="1">
    <location>
        <begin position="197"/>
        <end position="217"/>
    </location>
</feature>
<feature type="topological domain" description="Cytoplasmic" evidence="1">
    <location>
        <begin position="218"/>
        <end position="237"/>
    </location>
</feature>
<feature type="transmembrane region" description="Helical; Name=6" evidence="1">
    <location>
        <begin position="238"/>
        <end position="258"/>
    </location>
</feature>
<feature type="topological domain" description="Extracellular" evidence="1">
    <location>
        <begin position="259"/>
        <end position="271"/>
    </location>
</feature>
<feature type="transmembrane region" description="Helical; Name=7" evidence="1">
    <location>
        <begin position="272"/>
        <end position="292"/>
    </location>
</feature>
<feature type="topological domain" description="Cytoplasmic" evidence="1">
    <location>
        <begin position="293"/>
        <end position="315"/>
    </location>
</feature>
<feature type="glycosylation site" description="N-linked (GlcNAc...) asparagine" evidence="1">
    <location>
        <position position="5"/>
    </location>
</feature>
<feature type="disulfide bond" evidence="2">
    <location>
        <begin position="97"/>
        <end position="189"/>
    </location>
</feature>
<feature type="sequence variant" id="VAR_053201" description="In dbSNP:rs10792043." evidence="3 4">
    <original>V</original>
    <variation>L</variation>
    <location>
        <position position="69"/>
    </location>
</feature>
<feature type="sequence variant" id="VAR_053202" description="In dbSNP:rs10896488.">
    <original>I</original>
    <variation>T</variation>
    <location>
        <position position="313"/>
    </location>
</feature>
<organism>
    <name type="scientific">Homo sapiens</name>
    <name type="common">Human</name>
    <dbReference type="NCBI Taxonomy" id="9606"/>
    <lineage>
        <taxon>Eukaryota</taxon>
        <taxon>Metazoa</taxon>
        <taxon>Chordata</taxon>
        <taxon>Craniata</taxon>
        <taxon>Vertebrata</taxon>
        <taxon>Euteleostomi</taxon>
        <taxon>Mammalia</taxon>
        <taxon>Eutheria</taxon>
        <taxon>Euarchontoglires</taxon>
        <taxon>Primates</taxon>
        <taxon>Haplorrhini</taxon>
        <taxon>Catarrhini</taxon>
        <taxon>Hominidae</taxon>
        <taxon>Homo</taxon>
    </lineage>
</organism>
<protein>
    <recommendedName>
        <fullName>Olfactory receptor 5M10</fullName>
    </recommendedName>
    <alternativeName>
        <fullName>Olfactory receptor OR11-207</fullName>
    </alternativeName>
</protein>
<gene>
    <name type="primary">OR5M10</name>
</gene>
<name>OR5MA_HUMAN</name>
<proteinExistence type="evidence at transcript level"/>
<comment type="function">
    <text evidence="5">Odorant receptor.</text>
</comment>
<comment type="subcellular location">
    <subcellularLocation>
        <location>Cell membrane</location>
        <topology>Multi-pass membrane protein</topology>
    </subcellularLocation>
</comment>
<comment type="similarity">
    <text evidence="2">Belongs to the G-protein coupled receptor 1 family.</text>
</comment>
<comment type="online information" name="Human Olfactory Receptor Data Exploratorium (HORDE)">
    <link uri="http://genome.weizmann.ac.il/horde/card/index/symbol:OR5M10"/>
</comment>
<evidence type="ECO:0000255" key="1"/>
<evidence type="ECO:0000255" key="2">
    <source>
        <dbReference type="PROSITE-ProRule" id="PRU00521"/>
    </source>
</evidence>
<evidence type="ECO:0000269" key="3">
    <source>
    </source>
</evidence>
<evidence type="ECO:0000269" key="4">
    <source ref="2"/>
</evidence>
<evidence type="ECO:0000305" key="5"/>